<protein>
    <recommendedName>
        <fullName evidence="1">Succinyl-diaminopimelate desuccinylase</fullName>
        <shortName evidence="1">SDAP desuccinylase</shortName>
        <ecNumber evidence="1">3.5.1.18</ecNumber>
    </recommendedName>
    <alternativeName>
        <fullName evidence="1">N-succinyl-LL-2,6-diaminoheptanedioate amidohydrolase</fullName>
    </alternativeName>
</protein>
<feature type="chain" id="PRO_0000375548" description="Succinyl-diaminopimelate desuccinylase">
    <location>
        <begin position="1"/>
        <end position="375"/>
    </location>
</feature>
<feature type="active site" evidence="1">
    <location>
        <position position="68"/>
    </location>
</feature>
<feature type="active site" description="Proton acceptor" evidence="1">
    <location>
        <position position="133"/>
    </location>
</feature>
<feature type="binding site" evidence="1">
    <location>
        <position position="66"/>
    </location>
    <ligand>
        <name>Zn(2+)</name>
        <dbReference type="ChEBI" id="CHEBI:29105"/>
        <label>1</label>
    </ligand>
</feature>
<feature type="binding site" evidence="1">
    <location>
        <position position="99"/>
    </location>
    <ligand>
        <name>Zn(2+)</name>
        <dbReference type="ChEBI" id="CHEBI:29105"/>
        <label>1</label>
    </ligand>
</feature>
<feature type="binding site" evidence="1">
    <location>
        <position position="99"/>
    </location>
    <ligand>
        <name>Zn(2+)</name>
        <dbReference type="ChEBI" id="CHEBI:29105"/>
        <label>2</label>
    </ligand>
</feature>
<feature type="binding site" evidence="1">
    <location>
        <position position="134"/>
    </location>
    <ligand>
        <name>Zn(2+)</name>
        <dbReference type="ChEBI" id="CHEBI:29105"/>
        <label>2</label>
    </ligand>
</feature>
<feature type="binding site" evidence="1">
    <location>
        <position position="162"/>
    </location>
    <ligand>
        <name>Zn(2+)</name>
        <dbReference type="ChEBI" id="CHEBI:29105"/>
        <label>1</label>
    </ligand>
</feature>
<feature type="binding site" evidence="1">
    <location>
        <position position="348"/>
    </location>
    <ligand>
        <name>Zn(2+)</name>
        <dbReference type="ChEBI" id="CHEBI:29105"/>
        <label>2</label>
    </ligand>
</feature>
<organism>
    <name type="scientific">Cronobacter sakazakii (strain ATCC BAA-894)</name>
    <name type="common">Enterobacter sakazakii</name>
    <dbReference type="NCBI Taxonomy" id="290339"/>
    <lineage>
        <taxon>Bacteria</taxon>
        <taxon>Pseudomonadati</taxon>
        <taxon>Pseudomonadota</taxon>
        <taxon>Gammaproteobacteria</taxon>
        <taxon>Enterobacterales</taxon>
        <taxon>Enterobacteriaceae</taxon>
        <taxon>Cronobacter</taxon>
    </lineage>
</organism>
<reference key="1">
    <citation type="journal article" date="2010" name="PLoS ONE">
        <title>Genome sequence of Cronobacter sakazakii BAA-894 and comparative genomic hybridization analysis with other Cronobacter species.</title>
        <authorList>
            <person name="Kucerova E."/>
            <person name="Clifton S.W."/>
            <person name="Xia X.Q."/>
            <person name="Long F."/>
            <person name="Porwollik S."/>
            <person name="Fulton L."/>
            <person name="Fronick C."/>
            <person name="Minx P."/>
            <person name="Kyung K."/>
            <person name="Warren W."/>
            <person name="Fulton R."/>
            <person name="Feng D."/>
            <person name="Wollam A."/>
            <person name="Shah N."/>
            <person name="Bhonagiri V."/>
            <person name="Nash W.E."/>
            <person name="Hallsworth-Pepin K."/>
            <person name="Wilson R.K."/>
            <person name="McClelland M."/>
            <person name="Forsythe S.J."/>
        </authorList>
    </citation>
    <scope>NUCLEOTIDE SEQUENCE [LARGE SCALE GENOMIC DNA]</scope>
    <source>
        <strain>ATCC BAA-894</strain>
    </source>
</reference>
<accession>A7ML10</accession>
<evidence type="ECO:0000255" key="1">
    <source>
        <dbReference type="HAMAP-Rule" id="MF_01690"/>
    </source>
</evidence>
<name>DAPE_CROS8</name>
<proteinExistence type="inferred from homology"/>
<sequence length="375" mass="41244">MSCPVIELTQQLIRRPSLSPDDAGCQALLIERLQAVGFTVEPMNIGDTQNFWAWRGTGETLAFAGHTDVVPAGDVERWINPPFEPTIRDGMLFGRGAADMKGSLAAMVVAAERFVAQHPHHRGRLAFLITSDEEASATNGTVKVVEALMARGERLDYCLVGEPSSSEVVGDVVKNGRRGSLTCNLTIHGVQGHVAYPHLADNPVHRAAPMLNELVGIEWDRGNEFFPPTSMQIANIQAGTGSNNVIPGDLHVQFNFRFSTELTDEMIKQRVVALLEKYQLRYTLDWWLSGQPFLTARGKLVDAVVNAVHHYNEIKPQLLTTGGTSDGRFIARMGAQVVELGPVNATIHKINECVKASDLQLLARMYQRIMEQLVA</sequence>
<gene>
    <name evidence="1" type="primary">dapE</name>
    <name type="ordered locus">ESA_00778</name>
</gene>
<comment type="function">
    <text evidence="1">Catalyzes the hydrolysis of N-succinyl-L,L-diaminopimelic acid (SDAP), forming succinate and LL-2,6-diaminopimelate (DAP), an intermediate involved in the bacterial biosynthesis of lysine and meso-diaminopimelic acid, an essential component of bacterial cell walls.</text>
</comment>
<comment type="catalytic activity">
    <reaction evidence="1">
        <text>N-succinyl-(2S,6S)-2,6-diaminopimelate + H2O = (2S,6S)-2,6-diaminopimelate + succinate</text>
        <dbReference type="Rhea" id="RHEA:22608"/>
        <dbReference type="ChEBI" id="CHEBI:15377"/>
        <dbReference type="ChEBI" id="CHEBI:30031"/>
        <dbReference type="ChEBI" id="CHEBI:57609"/>
        <dbReference type="ChEBI" id="CHEBI:58087"/>
        <dbReference type="EC" id="3.5.1.18"/>
    </reaction>
</comment>
<comment type="cofactor">
    <cofactor evidence="1">
        <name>Zn(2+)</name>
        <dbReference type="ChEBI" id="CHEBI:29105"/>
    </cofactor>
    <cofactor evidence="1">
        <name>Co(2+)</name>
        <dbReference type="ChEBI" id="CHEBI:48828"/>
    </cofactor>
    <text evidence="1">Binds 2 Zn(2+) or Co(2+) ions per subunit.</text>
</comment>
<comment type="pathway">
    <text evidence="1">Amino-acid biosynthesis; L-lysine biosynthesis via DAP pathway; LL-2,6-diaminopimelate from (S)-tetrahydrodipicolinate (succinylase route): step 3/3.</text>
</comment>
<comment type="subunit">
    <text evidence="1">Homodimer.</text>
</comment>
<comment type="similarity">
    <text evidence="1">Belongs to the peptidase M20A family. DapE subfamily.</text>
</comment>
<dbReference type="EC" id="3.5.1.18" evidence="1"/>
<dbReference type="EMBL" id="CP000783">
    <property type="protein sequence ID" value="ABU76055.1"/>
    <property type="molecule type" value="Genomic_DNA"/>
</dbReference>
<dbReference type="RefSeq" id="WP_012124066.1">
    <property type="nucleotide sequence ID" value="NC_009778.1"/>
</dbReference>
<dbReference type="SMR" id="A7ML10"/>
<dbReference type="MEROPS" id="M20.010"/>
<dbReference type="GeneID" id="56729663"/>
<dbReference type="KEGG" id="esa:ESA_00778"/>
<dbReference type="PATRIC" id="fig|290339.8.peg.690"/>
<dbReference type="HOGENOM" id="CLU_021802_4_0_6"/>
<dbReference type="UniPathway" id="UPA00034">
    <property type="reaction ID" value="UER00021"/>
</dbReference>
<dbReference type="Proteomes" id="UP000000260">
    <property type="component" value="Chromosome"/>
</dbReference>
<dbReference type="GO" id="GO:0008777">
    <property type="term" value="F:acetylornithine deacetylase activity"/>
    <property type="evidence" value="ECO:0007669"/>
    <property type="project" value="TreeGrafter"/>
</dbReference>
<dbReference type="GO" id="GO:0050897">
    <property type="term" value="F:cobalt ion binding"/>
    <property type="evidence" value="ECO:0007669"/>
    <property type="project" value="UniProtKB-UniRule"/>
</dbReference>
<dbReference type="GO" id="GO:0009014">
    <property type="term" value="F:succinyl-diaminopimelate desuccinylase activity"/>
    <property type="evidence" value="ECO:0007669"/>
    <property type="project" value="UniProtKB-UniRule"/>
</dbReference>
<dbReference type="GO" id="GO:0008270">
    <property type="term" value="F:zinc ion binding"/>
    <property type="evidence" value="ECO:0007669"/>
    <property type="project" value="UniProtKB-UniRule"/>
</dbReference>
<dbReference type="GO" id="GO:0019877">
    <property type="term" value="P:diaminopimelate biosynthetic process"/>
    <property type="evidence" value="ECO:0007669"/>
    <property type="project" value="UniProtKB-UniRule"/>
</dbReference>
<dbReference type="GO" id="GO:0006526">
    <property type="term" value="P:L-arginine biosynthetic process"/>
    <property type="evidence" value="ECO:0007669"/>
    <property type="project" value="TreeGrafter"/>
</dbReference>
<dbReference type="GO" id="GO:0009089">
    <property type="term" value="P:lysine biosynthetic process via diaminopimelate"/>
    <property type="evidence" value="ECO:0007669"/>
    <property type="project" value="UniProtKB-UniRule"/>
</dbReference>
<dbReference type="CDD" id="cd03891">
    <property type="entry name" value="M20_DapE_proteobac"/>
    <property type="match status" value="1"/>
</dbReference>
<dbReference type="FunFam" id="3.30.70.360:FF:000011">
    <property type="entry name" value="Succinyl-diaminopimelate desuccinylase"/>
    <property type="match status" value="1"/>
</dbReference>
<dbReference type="FunFam" id="3.40.630.10:FF:000005">
    <property type="entry name" value="Succinyl-diaminopimelate desuccinylase"/>
    <property type="match status" value="1"/>
</dbReference>
<dbReference type="FunFam" id="3.40.630.10:FF:000010">
    <property type="entry name" value="Succinyl-diaminopimelate desuccinylase"/>
    <property type="match status" value="1"/>
</dbReference>
<dbReference type="Gene3D" id="3.40.630.10">
    <property type="entry name" value="Zn peptidases"/>
    <property type="match status" value="2"/>
</dbReference>
<dbReference type="HAMAP" id="MF_01690">
    <property type="entry name" value="DapE"/>
    <property type="match status" value="1"/>
</dbReference>
<dbReference type="InterPro" id="IPR001261">
    <property type="entry name" value="ArgE/DapE_CS"/>
</dbReference>
<dbReference type="InterPro" id="IPR036264">
    <property type="entry name" value="Bact_exopeptidase_dim_dom"/>
</dbReference>
<dbReference type="InterPro" id="IPR005941">
    <property type="entry name" value="DapE_proteobac"/>
</dbReference>
<dbReference type="InterPro" id="IPR002933">
    <property type="entry name" value="Peptidase_M20"/>
</dbReference>
<dbReference type="InterPro" id="IPR011650">
    <property type="entry name" value="Peptidase_M20_dimer"/>
</dbReference>
<dbReference type="InterPro" id="IPR050072">
    <property type="entry name" value="Peptidase_M20A"/>
</dbReference>
<dbReference type="NCBIfam" id="TIGR01246">
    <property type="entry name" value="dapE_proteo"/>
    <property type="match status" value="1"/>
</dbReference>
<dbReference type="NCBIfam" id="NF009557">
    <property type="entry name" value="PRK13009.1"/>
    <property type="match status" value="1"/>
</dbReference>
<dbReference type="PANTHER" id="PTHR43808">
    <property type="entry name" value="ACETYLORNITHINE DEACETYLASE"/>
    <property type="match status" value="1"/>
</dbReference>
<dbReference type="PANTHER" id="PTHR43808:SF31">
    <property type="entry name" value="N-ACETYL-L-CITRULLINE DEACETYLASE"/>
    <property type="match status" value="1"/>
</dbReference>
<dbReference type="Pfam" id="PF07687">
    <property type="entry name" value="M20_dimer"/>
    <property type="match status" value="1"/>
</dbReference>
<dbReference type="Pfam" id="PF01546">
    <property type="entry name" value="Peptidase_M20"/>
    <property type="match status" value="1"/>
</dbReference>
<dbReference type="SUPFAM" id="SSF55031">
    <property type="entry name" value="Bacterial exopeptidase dimerisation domain"/>
    <property type="match status" value="1"/>
</dbReference>
<dbReference type="SUPFAM" id="SSF53187">
    <property type="entry name" value="Zn-dependent exopeptidases"/>
    <property type="match status" value="1"/>
</dbReference>
<dbReference type="PROSITE" id="PS00758">
    <property type="entry name" value="ARGE_DAPE_CPG2_1"/>
    <property type="match status" value="1"/>
</dbReference>
<dbReference type="PROSITE" id="PS00759">
    <property type="entry name" value="ARGE_DAPE_CPG2_2"/>
    <property type="match status" value="1"/>
</dbReference>
<keyword id="KW-0028">Amino-acid biosynthesis</keyword>
<keyword id="KW-0170">Cobalt</keyword>
<keyword id="KW-0220">Diaminopimelate biosynthesis</keyword>
<keyword id="KW-0378">Hydrolase</keyword>
<keyword id="KW-0457">Lysine biosynthesis</keyword>
<keyword id="KW-0479">Metal-binding</keyword>
<keyword id="KW-1185">Reference proteome</keyword>
<keyword id="KW-0862">Zinc</keyword>